<organism>
    <name type="scientific">Klebsiella pneumoniae (strain 342)</name>
    <dbReference type="NCBI Taxonomy" id="507522"/>
    <lineage>
        <taxon>Bacteria</taxon>
        <taxon>Pseudomonadati</taxon>
        <taxon>Pseudomonadota</taxon>
        <taxon>Gammaproteobacteria</taxon>
        <taxon>Enterobacterales</taxon>
        <taxon>Enterobacteriaceae</taxon>
        <taxon>Klebsiella/Raoultella group</taxon>
        <taxon>Klebsiella</taxon>
        <taxon>Klebsiella pneumoniae complex</taxon>
    </lineage>
</organism>
<name>DEOC_KLEP3</name>
<comment type="function">
    <text evidence="1">Catalyzes a reversible aldol reaction between acetaldehyde and D-glyceraldehyde 3-phosphate to generate 2-deoxy-D-ribose 5-phosphate.</text>
</comment>
<comment type="catalytic activity">
    <reaction evidence="1">
        <text>2-deoxy-D-ribose 5-phosphate = D-glyceraldehyde 3-phosphate + acetaldehyde</text>
        <dbReference type="Rhea" id="RHEA:12821"/>
        <dbReference type="ChEBI" id="CHEBI:15343"/>
        <dbReference type="ChEBI" id="CHEBI:59776"/>
        <dbReference type="ChEBI" id="CHEBI:62877"/>
        <dbReference type="EC" id="4.1.2.4"/>
    </reaction>
</comment>
<comment type="pathway">
    <text evidence="1">Carbohydrate degradation; 2-deoxy-D-ribose 1-phosphate degradation; D-glyceraldehyde 3-phosphate and acetaldehyde from 2-deoxy-alpha-D-ribose 1-phosphate: step 2/2.</text>
</comment>
<comment type="subcellular location">
    <subcellularLocation>
        <location evidence="1">Cytoplasm</location>
    </subcellularLocation>
</comment>
<comment type="similarity">
    <text evidence="1">Belongs to the DeoC/FbaB aldolase family. DeoC type 2 subfamily.</text>
</comment>
<sequence>MTDLKASSLRALKLMDLTTLNDDDTNEKVIALCHQAKTPVGNTAAVCIYPRFIPIARKTLNEQGTPDIRIATVTNFPHGNDDIDIALAETRAAIAYGADEVDVVFPYRALIAGNEQVGFELVKACKEACAAANVLLKVIIETGELKEEALIRKASEISIKAGADFIKTSTGKVPVNATPESARIMMEVIRDMGVEKTVGFKPAGGVRSAEDAQQFLAIADELFGADWADSRHYRFGASSLLASLLKALGHGDGKSASSY</sequence>
<protein>
    <recommendedName>
        <fullName evidence="1">Deoxyribose-phosphate aldolase</fullName>
        <shortName evidence="1">DERA</shortName>
        <ecNumber evidence="1">4.1.2.4</ecNumber>
    </recommendedName>
    <alternativeName>
        <fullName evidence="1">2-deoxy-D-ribose 5-phosphate aldolase</fullName>
    </alternativeName>
    <alternativeName>
        <fullName evidence="1">Phosphodeoxyriboaldolase</fullName>
        <shortName evidence="1">Deoxyriboaldolase</shortName>
    </alternativeName>
</protein>
<dbReference type="EC" id="4.1.2.4" evidence="1"/>
<dbReference type="EMBL" id="CP000964">
    <property type="protein sequence ID" value="ACI07583.1"/>
    <property type="molecule type" value="Genomic_DNA"/>
</dbReference>
<dbReference type="SMR" id="B5Y277"/>
<dbReference type="KEGG" id="kpe:KPK_4777"/>
<dbReference type="HOGENOM" id="CLU_053595_3_1_6"/>
<dbReference type="UniPathway" id="UPA00002">
    <property type="reaction ID" value="UER00468"/>
</dbReference>
<dbReference type="Proteomes" id="UP000001734">
    <property type="component" value="Chromosome"/>
</dbReference>
<dbReference type="GO" id="GO:0005737">
    <property type="term" value="C:cytoplasm"/>
    <property type="evidence" value="ECO:0007669"/>
    <property type="project" value="UniProtKB-SubCell"/>
</dbReference>
<dbReference type="GO" id="GO:0004139">
    <property type="term" value="F:deoxyribose-phosphate aldolase activity"/>
    <property type="evidence" value="ECO:0007669"/>
    <property type="project" value="UniProtKB-UniRule"/>
</dbReference>
<dbReference type="GO" id="GO:0006018">
    <property type="term" value="P:2-deoxyribose 1-phosphate catabolic process"/>
    <property type="evidence" value="ECO:0007669"/>
    <property type="project" value="UniProtKB-UniRule"/>
</dbReference>
<dbReference type="GO" id="GO:0016052">
    <property type="term" value="P:carbohydrate catabolic process"/>
    <property type="evidence" value="ECO:0007669"/>
    <property type="project" value="TreeGrafter"/>
</dbReference>
<dbReference type="GO" id="GO:0009264">
    <property type="term" value="P:deoxyribonucleotide catabolic process"/>
    <property type="evidence" value="ECO:0007669"/>
    <property type="project" value="InterPro"/>
</dbReference>
<dbReference type="CDD" id="cd00959">
    <property type="entry name" value="DeoC"/>
    <property type="match status" value="1"/>
</dbReference>
<dbReference type="FunFam" id="3.20.20.70:FF:000034">
    <property type="entry name" value="Deoxyribose-phosphate aldolase"/>
    <property type="match status" value="1"/>
</dbReference>
<dbReference type="Gene3D" id="3.20.20.70">
    <property type="entry name" value="Aldolase class I"/>
    <property type="match status" value="1"/>
</dbReference>
<dbReference type="HAMAP" id="MF_00592">
    <property type="entry name" value="DeoC_type2"/>
    <property type="match status" value="1"/>
</dbReference>
<dbReference type="InterPro" id="IPR013785">
    <property type="entry name" value="Aldolase_TIM"/>
</dbReference>
<dbReference type="InterPro" id="IPR011343">
    <property type="entry name" value="DeoC"/>
</dbReference>
<dbReference type="InterPro" id="IPR002915">
    <property type="entry name" value="DeoC/FbaB/LacD_aldolase"/>
</dbReference>
<dbReference type="InterPro" id="IPR023649">
    <property type="entry name" value="DeoC_typeII"/>
</dbReference>
<dbReference type="NCBIfam" id="TIGR00126">
    <property type="entry name" value="deoC"/>
    <property type="match status" value="1"/>
</dbReference>
<dbReference type="PANTHER" id="PTHR10889">
    <property type="entry name" value="DEOXYRIBOSE-PHOSPHATE ALDOLASE"/>
    <property type="match status" value="1"/>
</dbReference>
<dbReference type="PANTHER" id="PTHR10889:SF3">
    <property type="entry name" value="DEOXYRIBOSE-PHOSPHATE ALDOLASE"/>
    <property type="match status" value="1"/>
</dbReference>
<dbReference type="Pfam" id="PF01791">
    <property type="entry name" value="DeoC"/>
    <property type="match status" value="1"/>
</dbReference>
<dbReference type="PIRSF" id="PIRSF001357">
    <property type="entry name" value="DeoC"/>
    <property type="match status" value="1"/>
</dbReference>
<dbReference type="SMART" id="SM01133">
    <property type="entry name" value="DeoC"/>
    <property type="match status" value="1"/>
</dbReference>
<dbReference type="SUPFAM" id="SSF51569">
    <property type="entry name" value="Aldolase"/>
    <property type="match status" value="1"/>
</dbReference>
<keyword id="KW-0963">Cytoplasm</keyword>
<keyword id="KW-0456">Lyase</keyword>
<keyword id="KW-0704">Schiff base</keyword>
<evidence type="ECO:0000255" key="1">
    <source>
        <dbReference type="HAMAP-Rule" id="MF_00592"/>
    </source>
</evidence>
<accession>B5Y277</accession>
<gene>
    <name evidence="1" type="primary">deoC</name>
    <name type="ordered locus">KPK_4777</name>
</gene>
<feature type="chain" id="PRO_1000129809" description="Deoxyribose-phosphate aldolase">
    <location>
        <begin position="1"/>
        <end position="259"/>
    </location>
</feature>
<feature type="active site" description="Proton donor/acceptor" evidence="1">
    <location>
        <position position="102"/>
    </location>
</feature>
<feature type="active site" description="Schiff-base intermediate with acetaldehyde" evidence="1">
    <location>
        <position position="167"/>
    </location>
</feature>
<feature type="active site" description="Proton donor/acceptor" evidence="1">
    <location>
        <position position="201"/>
    </location>
</feature>
<reference key="1">
    <citation type="journal article" date="2008" name="PLoS Genet.">
        <title>Complete genome sequence of the N2-fixing broad host range endophyte Klebsiella pneumoniae 342 and virulence predictions verified in mice.</title>
        <authorList>
            <person name="Fouts D.E."/>
            <person name="Tyler H.L."/>
            <person name="DeBoy R.T."/>
            <person name="Daugherty S."/>
            <person name="Ren Q."/>
            <person name="Badger J.H."/>
            <person name="Durkin A.S."/>
            <person name="Huot H."/>
            <person name="Shrivastava S."/>
            <person name="Kothari S."/>
            <person name="Dodson R.J."/>
            <person name="Mohamoud Y."/>
            <person name="Khouri H."/>
            <person name="Roesch L.F.W."/>
            <person name="Krogfelt K.A."/>
            <person name="Struve C."/>
            <person name="Triplett E.W."/>
            <person name="Methe B.A."/>
        </authorList>
    </citation>
    <scope>NUCLEOTIDE SEQUENCE [LARGE SCALE GENOMIC DNA]</scope>
    <source>
        <strain>342</strain>
    </source>
</reference>
<proteinExistence type="inferred from homology"/>